<gene>
    <name evidence="2" type="primary">rpsL</name>
    <name type="ordered locus">FP1343</name>
</gene>
<organism>
    <name type="scientific">Flavobacterium psychrophilum (strain ATCC 49511 / DSM 21280 / CIP 103535 / JIP02/86)</name>
    <dbReference type="NCBI Taxonomy" id="402612"/>
    <lineage>
        <taxon>Bacteria</taxon>
        <taxon>Pseudomonadati</taxon>
        <taxon>Bacteroidota</taxon>
        <taxon>Flavobacteriia</taxon>
        <taxon>Flavobacteriales</taxon>
        <taxon>Flavobacteriaceae</taxon>
        <taxon>Flavobacterium</taxon>
    </lineage>
</organism>
<evidence type="ECO:0000250" key="1"/>
<evidence type="ECO:0000255" key="2">
    <source>
        <dbReference type="HAMAP-Rule" id="MF_00403"/>
    </source>
</evidence>
<evidence type="ECO:0000256" key="3">
    <source>
        <dbReference type="SAM" id="MobiDB-lite"/>
    </source>
</evidence>
<evidence type="ECO:0000305" key="4"/>
<comment type="function">
    <text evidence="2">With S4 and S5 plays an important role in translational accuracy.</text>
</comment>
<comment type="function">
    <text evidence="2">Interacts with and stabilizes bases of the 16S rRNA that are involved in tRNA selection in the A site and with the mRNA backbone. Located at the interface of the 30S and 50S subunits, it traverses the body of the 30S subunit contacting proteins on the other side and probably holding the rRNA structure together. The combined cluster of proteins S8, S12 and S17 appears to hold together the shoulder and platform of the 30S subunit.</text>
</comment>
<comment type="subunit">
    <text evidence="2">Part of the 30S ribosomal subunit. Contacts proteins S8 and S17. May interact with IF1 in the 30S initiation complex.</text>
</comment>
<comment type="similarity">
    <text evidence="2">Belongs to the universal ribosomal protein uS12 family.</text>
</comment>
<keyword id="KW-0488">Methylation</keyword>
<keyword id="KW-1185">Reference proteome</keyword>
<keyword id="KW-0687">Ribonucleoprotein</keyword>
<keyword id="KW-0689">Ribosomal protein</keyword>
<keyword id="KW-0694">RNA-binding</keyword>
<keyword id="KW-0699">rRNA-binding</keyword>
<keyword id="KW-0820">tRNA-binding</keyword>
<reference key="1">
    <citation type="journal article" date="2007" name="Nat. Biotechnol.">
        <title>Complete genome sequence of the fish pathogen Flavobacterium psychrophilum.</title>
        <authorList>
            <person name="Duchaud E."/>
            <person name="Boussaha M."/>
            <person name="Loux V."/>
            <person name="Bernardet J.-F."/>
            <person name="Michel C."/>
            <person name="Kerouault B."/>
            <person name="Mondot S."/>
            <person name="Nicolas P."/>
            <person name="Bossy R."/>
            <person name="Caron C."/>
            <person name="Bessieres P."/>
            <person name="Gibrat J.-F."/>
            <person name="Claverol S."/>
            <person name="Dumetz F."/>
            <person name="Le Henaff M."/>
            <person name="Benmansour A."/>
        </authorList>
    </citation>
    <scope>NUCLEOTIDE SEQUENCE [LARGE SCALE GENOMIC DNA]</scope>
    <source>
        <strain>ATCC 49511 / DSM 21280 / CIP 103535 / JIP02/86</strain>
    </source>
</reference>
<protein>
    <recommendedName>
        <fullName evidence="2">Small ribosomal subunit protein uS12</fullName>
    </recommendedName>
    <alternativeName>
        <fullName evidence="4">30S ribosomal protein S12</fullName>
    </alternativeName>
</protein>
<feature type="chain" id="PRO_1000049784" description="Small ribosomal subunit protein uS12">
    <location>
        <begin position="1"/>
        <end position="127"/>
    </location>
</feature>
<feature type="region of interest" description="Disordered" evidence="3">
    <location>
        <begin position="101"/>
        <end position="127"/>
    </location>
</feature>
<feature type="compositionally biased region" description="Basic residues" evidence="3">
    <location>
        <begin position="111"/>
        <end position="127"/>
    </location>
</feature>
<feature type="modified residue" description="3-methylthioaspartic acid" evidence="1">
    <location>
        <position position="89"/>
    </location>
</feature>
<sequence length="127" mass="14120">MPTIQQLVRIGRTKMTKKSKSVALDSCPQRRGVCTRVYTTTPKKPNSAMRKVARVRLTNGNEVNAYIPGEGHNLQEHSIVLVRGGRVKDLPGVRYHIVRGALDTSGVAGRTQRRSKYGAKRPKEAKK</sequence>
<proteinExistence type="inferred from homology"/>
<dbReference type="EMBL" id="AM398681">
    <property type="protein sequence ID" value="CAL43426.1"/>
    <property type="molecule type" value="Genomic_DNA"/>
</dbReference>
<dbReference type="RefSeq" id="WP_011963473.1">
    <property type="nucleotide sequence ID" value="NC_009613.3"/>
</dbReference>
<dbReference type="RefSeq" id="YP_001296237.1">
    <property type="nucleotide sequence ID" value="NC_009613.3"/>
</dbReference>
<dbReference type="SMR" id="A6GZA3"/>
<dbReference type="STRING" id="402612.FP1343"/>
<dbReference type="EnsemblBacteria" id="CAL43426">
    <property type="protein sequence ID" value="CAL43426"/>
    <property type="gene ID" value="FP1343"/>
</dbReference>
<dbReference type="GeneID" id="66553246"/>
<dbReference type="KEGG" id="fps:FP1343"/>
<dbReference type="PATRIC" id="fig|402612.5.peg.1360"/>
<dbReference type="eggNOG" id="COG0048">
    <property type="taxonomic scope" value="Bacteria"/>
</dbReference>
<dbReference type="HOGENOM" id="CLU_104295_1_2_10"/>
<dbReference type="OrthoDB" id="9802366at2"/>
<dbReference type="Proteomes" id="UP000006394">
    <property type="component" value="Chromosome"/>
</dbReference>
<dbReference type="GO" id="GO:0015935">
    <property type="term" value="C:small ribosomal subunit"/>
    <property type="evidence" value="ECO:0007669"/>
    <property type="project" value="InterPro"/>
</dbReference>
<dbReference type="GO" id="GO:0019843">
    <property type="term" value="F:rRNA binding"/>
    <property type="evidence" value="ECO:0007669"/>
    <property type="project" value="UniProtKB-UniRule"/>
</dbReference>
<dbReference type="GO" id="GO:0003735">
    <property type="term" value="F:structural constituent of ribosome"/>
    <property type="evidence" value="ECO:0007669"/>
    <property type="project" value="InterPro"/>
</dbReference>
<dbReference type="GO" id="GO:0000049">
    <property type="term" value="F:tRNA binding"/>
    <property type="evidence" value="ECO:0007669"/>
    <property type="project" value="UniProtKB-UniRule"/>
</dbReference>
<dbReference type="GO" id="GO:0006412">
    <property type="term" value="P:translation"/>
    <property type="evidence" value="ECO:0007669"/>
    <property type="project" value="UniProtKB-UniRule"/>
</dbReference>
<dbReference type="CDD" id="cd03368">
    <property type="entry name" value="Ribosomal_S12"/>
    <property type="match status" value="1"/>
</dbReference>
<dbReference type="FunFam" id="2.40.50.140:FF:000001">
    <property type="entry name" value="30S ribosomal protein S12"/>
    <property type="match status" value="1"/>
</dbReference>
<dbReference type="Gene3D" id="2.40.50.140">
    <property type="entry name" value="Nucleic acid-binding proteins"/>
    <property type="match status" value="1"/>
</dbReference>
<dbReference type="HAMAP" id="MF_00403_B">
    <property type="entry name" value="Ribosomal_uS12_B"/>
    <property type="match status" value="1"/>
</dbReference>
<dbReference type="InterPro" id="IPR012340">
    <property type="entry name" value="NA-bd_OB-fold"/>
</dbReference>
<dbReference type="InterPro" id="IPR006032">
    <property type="entry name" value="Ribosomal_uS12"/>
</dbReference>
<dbReference type="InterPro" id="IPR005679">
    <property type="entry name" value="Ribosomal_uS12_bac"/>
</dbReference>
<dbReference type="NCBIfam" id="TIGR00981">
    <property type="entry name" value="rpsL_bact"/>
    <property type="match status" value="1"/>
</dbReference>
<dbReference type="PANTHER" id="PTHR11652">
    <property type="entry name" value="30S RIBOSOMAL PROTEIN S12 FAMILY MEMBER"/>
    <property type="match status" value="1"/>
</dbReference>
<dbReference type="Pfam" id="PF00164">
    <property type="entry name" value="Ribosom_S12_S23"/>
    <property type="match status" value="1"/>
</dbReference>
<dbReference type="PIRSF" id="PIRSF002133">
    <property type="entry name" value="Ribosomal_S12/S23"/>
    <property type="match status" value="1"/>
</dbReference>
<dbReference type="PRINTS" id="PR01034">
    <property type="entry name" value="RIBOSOMALS12"/>
</dbReference>
<dbReference type="SUPFAM" id="SSF50249">
    <property type="entry name" value="Nucleic acid-binding proteins"/>
    <property type="match status" value="1"/>
</dbReference>
<dbReference type="PROSITE" id="PS00055">
    <property type="entry name" value="RIBOSOMAL_S12"/>
    <property type="match status" value="1"/>
</dbReference>
<name>RS12_FLAPJ</name>
<accession>A6GZA3</accession>